<feature type="chain" id="PRO_0000211430" description="RNA polymerase I-specific transcription initiation factor RRN3">
    <location>
        <begin position="1"/>
        <end position="627"/>
    </location>
</feature>
<feature type="region of interest" description="Disordered" evidence="1">
    <location>
        <begin position="263"/>
        <end position="305"/>
    </location>
</feature>
<feature type="compositionally biased region" description="Acidic residues" evidence="1">
    <location>
        <begin position="263"/>
        <end position="282"/>
    </location>
</feature>
<feature type="helix" evidence="9">
    <location>
        <begin position="51"/>
        <end position="60"/>
    </location>
</feature>
<feature type="turn" evidence="9">
    <location>
        <begin position="61"/>
        <end position="66"/>
    </location>
</feature>
<feature type="helix" evidence="9">
    <location>
        <begin position="71"/>
        <end position="78"/>
    </location>
</feature>
<feature type="helix" evidence="9">
    <location>
        <begin position="90"/>
        <end position="100"/>
    </location>
</feature>
<feature type="turn" evidence="9">
    <location>
        <begin position="104"/>
        <end position="108"/>
    </location>
</feature>
<feature type="turn" evidence="9">
    <location>
        <begin position="110"/>
        <end position="112"/>
    </location>
</feature>
<feature type="helix" evidence="9">
    <location>
        <begin position="113"/>
        <end position="120"/>
    </location>
</feature>
<feature type="turn" evidence="9">
    <location>
        <begin position="123"/>
        <end position="126"/>
    </location>
</feature>
<feature type="helix" evidence="9">
    <location>
        <begin position="130"/>
        <end position="146"/>
    </location>
</feature>
<feature type="helix" evidence="5">
    <location>
        <begin position="148"/>
        <end position="150"/>
    </location>
</feature>
<feature type="helix" evidence="9">
    <location>
        <begin position="151"/>
        <end position="159"/>
    </location>
</feature>
<feature type="turn" evidence="9">
    <location>
        <begin position="160"/>
        <end position="163"/>
    </location>
</feature>
<feature type="turn" evidence="9">
    <location>
        <begin position="166"/>
        <end position="168"/>
    </location>
</feature>
<feature type="helix" evidence="9">
    <location>
        <begin position="170"/>
        <end position="182"/>
    </location>
</feature>
<feature type="helix" evidence="5">
    <location>
        <begin position="184"/>
        <end position="186"/>
    </location>
</feature>
<feature type="helix" evidence="9">
    <location>
        <begin position="187"/>
        <end position="194"/>
    </location>
</feature>
<feature type="strand" evidence="6">
    <location>
        <begin position="201"/>
        <end position="203"/>
    </location>
</feature>
<feature type="helix" evidence="9">
    <location>
        <begin position="205"/>
        <end position="220"/>
    </location>
</feature>
<feature type="strand" evidence="9">
    <location>
        <begin position="223"/>
        <end position="225"/>
    </location>
</feature>
<feature type="helix" evidence="9">
    <location>
        <begin position="227"/>
        <end position="245"/>
    </location>
</feature>
<feature type="strand" evidence="8">
    <location>
        <begin position="250"/>
        <end position="252"/>
    </location>
</feature>
<feature type="helix" evidence="5">
    <location>
        <begin position="323"/>
        <end position="325"/>
    </location>
</feature>
<feature type="helix" evidence="9">
    <location>
        <begin position="327"/>
        <end position="346"/>
    </location>
</feature>
<feature type="turn" evidence="9">
    <location>
        <begin position="349"/>
        <end position="353"/>
    </location>
</feature>
<feature type="strand" evidence="9">
    <location>
        <begin position="354"/>
        <end position="356"/>
    </location>
</feature>
<feature type="helix" evidence="9">
    <location>
        <begin position="357"/>
        <end position="368"/>
    </location>
</feature>
<feature type="turn" evidence="9">
    <location>
        <begin position="369"/>
        <end position="374"/>
    </location>
</feature>
<feature type="strand" evidence="7">
    <location>
        <begin position="375"/>
        <end position="377"/>
    </location>
</feature>
<feature type="helix" evidence="9">
    <location>
        <begin position="383"/>
        <end position="388"/>
    </location>
</feature>
<feature type="helix" evidence="9">
    <location>
        <begin position="393"/>
        <end position="396"/>
    </location>
</feature>
<feature type="turn" evidence="9">
    <location>
        <begin position="397"/>
        <end position="401"/>
    </location>
</feature>
<feature type="helix" evidence="9">
    <location>
        <begin position="402"/>
        <end position="407"/>
    </location>
</feature>
<feature type="strand" evidence="9">
    <location>
        <begin position="410"/>
        <end position="412"/>
    </location>
</feature>
<feature type="helix" evidence="9">
    <location>
        <begin position="414"/>
        <end position="430"/>
    </location>
</feature>
<feature type="strand" evidence="10">
    <location>
        <begin position="431"/>
        <end position="434"/>
    </location>
</feature>
<feature type="helix" evidence="9">
    <location>
        <begin position="436"/>
        <end position="457"/>
    </location>
</feature>
<feature type="turn" evidence="9">
    <location>
        <begin position="459"/>
        <end position="461"/>
    </location>
</feature>
<feature type="strand" evidence="9">
    <location>
        <begin position="462"/>
        <end position="465"/>
    </location>
</feature>
<feature type="helix" evidence="9">
    <location>
        <begin position="467"/>
        <end position="470"/>
    </location>
</feature>
<feature type="helix" evidence="9">
    <location>
        <begin position="471"/>
        <end position="486"/>
    </location>
</feature>
<feature type="turn" evidence="9">
    <location>
        <begin position="488"/>
        <end position="490"/>
    </location>
</feature>
<feature type="strand" evidence="7">
    <location>
        <begin position="494"/>
        <end position="496"/>
    </location>
</feature>
<feature type="helix" evidence="5">
    <location>
        <begin position="499"/>
        <end position="501"/>
    </location>
</feature>
<feature type="helix" evidence="9">
    <location>
        <begin position="502"/>
        <end position="509"/>
    </location>
</feature>
<feature type="turn" evidence="9">
    <location>
        <begin position="516"/>
        <end position="518"/>
    </location>
</feature>
<feature type="helix" evidence="9">
    <location>
        <begin position="522"/>
        <end position="534"/>
    </location>
</feature>
<feature type="helix" evidence="9">
    <location>
        <begin position="541"/>
        <end position="550"/>
    </location>
</feature>
<feature type="helix" evidence="9">
    <location>
        <begin position="583"/>
        <end position="586"/>
    </location>
</feature>
<feature type="turn" evidence="9">
    <location>
        <begin position="587"/>
        <end position="590"/>
    </location>
</feature>
<feature type="helix" evidence="9">
    <location>
        <begin position="602"/>
        <end position="606"/>
    </location>
</feature>
<feature type="turn" evidence="9">
    <location>
        <begin position="607"/>
        <end position="609"/>
    </location>
</feature>
<feature type="helix" evidence="5">
    <location>
        <begin position="613"/>
        <end position="616"/>
    </location>
</feature>
<organism>
    <name type="scientific">Saccharomyces cerevisiae (strain ATCC 204508 / S288c)</name>
    <name type="common">Baker's yeast</name>
    <dbReference type="NCBI Taxonomy" id="559292"/>
    <lineage>
        <taxon>Eukaryota</taxon>
        <taxon>Fungi</taxon>
        <taxon>Dikarya</taxon>
        <taxon>Ascomycota</taxon>
        <taxon>Saccharomycotina</taxon>
        <taxon>Saccharomycetes</taxon>
        <taxon>Saccharomycetales</taxon>
        <taxon>Saccharomycetaceae</taxon>
        <taxon>Saccharomyces</taxon>
    </lineage>
</organism>
<dbReference type="EMBL" id="Z71927">
    <property type="protein sequence ID" value="CAA96470.1"/>
    <property type="molecule type" value="Genomic_DNA"/>
</dbReference>
<dbReference type="EMBL" id="Z28125">
    <property type="protein sequence ID" value="CAA81966.1"/>
    <property type="molecule type" value="Genomic_DNA"/>
</dbReference>
<dbReference type="EMBL" id="BK006944">
    <property type="protein sequence ID" value="DAA09036.1"/>
    <property type="molecule type" value="Genomic_DNA"/>
</dbReference>
<dbReference type="PIR" id="S37954">
    <property type="entry name" value="S37954"/>
</dbReference>
<dbReference type="RefSeq" id="NP_012797.1">
    <property type="nucleotide sequence ID" value="NM_001179691.1"/>
</dbReference>
<dbReference type="PDB" id="3TJ1">
    <property type="method" value="X-ray"/>
    <property type="resolution" value="2.85 A"/>
    <property type="chains" value="A/B=1-627"/>
</dbReference>
<dbReference type="PDB" id="5G5L">
    <property type="method" value="EM"/>
    <property type="resolution" value="4.80 A"/>
    <property type="chains" value="O=1-627"/>
</dbReference>
<dbReference type="PDB" id="5N5Y">
    <property type="method" value="EM"/>
    <property type="resolution" value="7.70 A"/>
    <property type="chains" value="O=1-627"/>
</dbReference>
<dbReference type="PDB" id="5N5Z">
    <property type="method" value="EM"/>
    <property type="resolution" value="7.70 A"/>
    <property type="chains" value="O=1-627"/>
</dbReference>
<dbReference type="PDB" id="5N60">
    <property type="method" value="EM"/>
    <property type="resolution" value="7.70 A"/>
    <property type="chains" value="O=1-627"/>
</dbReference>
<dbReference type="PDB" id="5N61">
    <property type="method" value="EM"/>
    <property type="resolution" value="3.40 A"/>
    <property type="chains" value="O=1-627"/>
</dbReference>
<dbReference type="PDB" id="5OA1">
    <property type="method" value="EM"/>
    <property type="resolution" value="4.40 A"/>
    <property type="chains" value="O=1-627"/>
</dbReference>
<dbReference type="PDB" id="6RQH">
    <property type="method" value="EM"/>
    <property type="resolution" value="3.70 A"/>
    <property type="chains" value="O=1-627"/>
</dbReference>
<dbReference type="PDB" id="6RQL">
    <property type="method" value="EM"/>
    <property type="resolution" value="2.90 A"/>
    <property type="chains" value="O=1-627"/>
</dbReference>
<dbReference type="PDB" id="6RQT">
    <property type="method" value="EM"/>
    <property type="resolution" value="4.00 A"/>
    <property type="chains" value="O=1-627"/>
</dbReference>
<dbReference type="PDB" id="6RRD">
    <property type="method" value="EM"/>
    <property type="resolution" value="3.10 A"/>
    <property type="chains" value="O=1-627"/>
</dbReference>
<dbReference type="PDB" id="6RUI">
    <property type="method" value="EM"/>
    <property type="resolution" value="2.70 A"/>
    <property type="chains" value="O=1-627"/>
</dbReference>
<dbReference type="PDB" id="6RUO">
    <property type="method" value="EM"/>
    <property type="resolution" value="3.50 A"/>
    <property type="chains" value="O=1-627"/>
</dbReference>
<dbReference type="PDB" id="6RWE">
    <property type="method" value="EM"/>
    <property type="resolution" value="3.00 A"/>
    <property type="chains" value="O=1-627"/>
</dbReference>
<dbReference type="PDB" id="6TPS">
    <property type="method" value="EM"/>
    <property type="resolution" value="3.54 A"/>
    <property type="chains" value="O=1-627"/>
</dbReference>
<dbReference type="PDBsum" id="3TJ1"/>
<dbReference type="PDBsum" id="5G5L"/>
<dbReference type="PDBsum" id="5N5Y"/>
<dbReference type="PDBsum" id="5N5Z"/>
<dbReference type="PDBsum" id="5N60"/>
<dbReference type="PDBsum" id="5N61"/>
<dbReference type="PDBsum" id="5OA1"/>
<dbReference type="PDBsum" id="6RQH"/>
<dbReference type="PDBsum" id="6RQL"/>
<dbReference type="PDBsum" id="6RQT"/>
<dbReference type="PDBsum" id="6RRD"/>
<dbReference type="PDBsum" id="6RUI"/>
<dbReference type="PDBsum" id="6RUO"/>
<dbReference type="PDBsum" id="6RWE"/>
<dbReference type="PDBsum" id="6TPS"/>
<dbReference type="EMDB" id="EMD-10006"/>
<dbReference type="EMDB" id="EMD-10007"/>
<dbReference type="EMDB" id="EMD-10038"/>
<dbReference type="EMDB" id="EMD-10544"/>
<dbReference type="EMDB" id="EMD-3439"/>
<dbReference type="EMDB" id="EMD-3590"/>
<dbReference type="EMDB" id="EMD-3591"/>
<dbReference type="EMDB" id="EMD-3592"/>
<dbReference type="EMDB" id="EMD-3593"/>
<dbReference type="EMDB" id="EMD-3727"/>
<dbReference type="EMDB" id="EMD-4982"/>
<dbReference type="EMDB" id="EMD-4984"/>
<dbReference type="EMDB" id="EMD-4985"/>
<dbReference type="EMDB" id="EMD-4987"/>
<dbReference type="SMR" id="P36070"/>
<dbReference type="BioGRID" id="34011">
    <property type="interactions" value="161"/>
</dbReference>
<dbReference type="DIP" id="DIP-6657N"/>
<dbReference type="FunCoup" id="P36070">
    <property type="interactions" value="750"/>
</dbReference>
<dbReference type="IntAct" id="P36070">
    <property type="interactions" value="10"/>
</dbReference>
<dbReference type="MINT" id="P36070"/>
<dbReference type="STRING" id="4932.YKL125W"/>
<dbReference type="GlyGen" id="P36070">
    <property type="glycosylation" value="2 sites, 1 O-linked glycan (2 sites)"/>
</dbReference>
<dbReference type="PaxDb" id="4932-YKL125W"/>
<dbReference type="PeptideAtlas" id="P36070"/>
<dbReference type="EnsemblFungi" id="YKL125W_mRNA">
    <property type="protein sequence ID" value="YKL125W"/>
    <property type="gene ID" value="YKL125W"/>
</dbReference>
<dbReference type="GeneID" id="853734"/>
<dbReference type="KEGG" id="sce:YKL125W"/>
<dbReference type="AGR" id="SGD:S000001608"/>
<dbReference type="SGD" id="S000001608">
    <property type="gene designation" value="RRN3"/>
</dbReference>
<dbReference type="VEuPathDB" id="FungiDB:YKL125W"/>
<dbReference type="eggNOG" id="KOG2434">
    <property type="taxonomic scope" value="Eukaryota"/>
</dbReference>
<dbReference type="GeneTree" id="ENSGT00390000001488"/>
<dbReference type="HOGENOM" id="CLU_010579_2_0_1"/>
<dbReference type="InParanoid" id="P36070"/>
<dbReference type="OMA" id="FKHFYAA"/>
<dbReference type="OrthoDB" id="26970at2759"/>
<dbReference type="BioCyc" id="YEAST:G3O-31907-MONOMER"/>
<dbReference type="Reactome" id="R-SCE-73762">
    <property type="pathway name" value="RNA Polymerase I Transcription Initiation"/>
</dbReference>
<dbReference type="Reactome" id="R-SCE-73772">
    <property type="pathway name" value="RNA Polymerase I Promoter Escape"/>
</dbReference>
<dbReference type="BioGRID-ORCS" id="853734">
    <property type="hits" value="4 hits in 10 CRISPR screens"/>
</dbReference>
<dbReference type="CD-CODE" id="BDAE0F88">
    <property type="entry name" value="Nucleolus"/>
</dbReference>
<dbReference type="EvolutionaryTrace" id="P36070"/>
<dbReference type="PRO" id="PR:P36070"/>
<dbReference type="Proteomes" id="UP000002311">
    <property type="component" value="Chromosome XI"/>
</dbReference>
<dbReference type="RNAct" id="P36070">
    <property type="molecule type" value="protein"/>
</dbReference>
<dbReference type="GO" id="GO:0005730">
    <property type="term" value="C:nucleolus"/>
    <property type="evidence" value="ECO:0000314"/>
    <property type="project" value="SGD"/>
</dbReference>
<dbReference type="GO" id="GO:0005634">
    <property type="term" value="C:nucleus"/>
    <property type="evidence" value="ECO:0000318"/>
    <property type="project" value="GO_Central"/>
</dbReference>
<dbReference type="GO" id="GO:0000182">
    <property type="term" value="F:rDNA binding"/>
    <property type="evidence" value="ECO:0000314"/>
    <property type="project" value="SGD"/>
</dbReference>
<dbReference type="GO" id="GO:0001042">
    <property type="term" value="F:RNA polymerase I core binding"/>
    <property type="evidence" value="ECO:0000314"/>
    <property type="project" value="SGD"/>
</dbReference>
<dbReference type="GO" id="GO:0001181">
    <property type="term" value="F:RNA polymerase I general transcription initiation factor activity"/>
    <property type="evidence" value="ECO:0000314"/>
    <property type="project" value="SGD"/>
</dbReference>
<dbReference type="GO" id="GO:0001179">
    <property type="term" value="F:RNA polymerase I general transcription initiation factor binding"/>
    <property type="evidence" value="ECO:0000314"/>
    <property type="project" value="SGD"/>
</dbReference>
<dbReference type="GO" id="GO:0006361">
    <property type="term" value="P:transcription initiation at RNA polymerase I promoter"/>
    <property type="evidence" value="ECO:0000315"/>
    <property type="project" value="SGD"/>
</dbReference>
<dbReference type="InterPro" id="IPR007991">
    <property type="entry name" value="RNA_pol_I_trans_ini_fac_RRN3"/>
</dbReference>
<dbReference type="PANTHER" id="PTHR12790:SF0">
    <property type="entry name" value="RNA POLYMERASE I-SPECIFIC TRANSCRIPTION INITIATION FACTOR RRN3-RELATED"/>
    <property type="match status" value="1"/>
</dbReference>
<dbReference type="PANTHER" id="PTHR12790">
    <property type="entry name" value="TRANSCRIPTION INITIATION FACTOR IA RRN3"/>
    <property type="match status" value="1"/>
</dbReference>
<dbReference type="Pfam" id="PF05327">
    <property type="entry name" value="RRN3"/>
    <property type="match status" value="1"/>
</dbReference>
<protein>
    <recommendedName>
        <fullName>RNA polymerase I-specific transcription initiation factor RRN3</fullName>
    </recommendedName>
</protein>
<proteinExistence type="evidence at protein level"/>
<comment type="function">
    <text>Required for efficient transcription initiation by RNA polymerase I. Interacts with Pol I in the absence of template DNA and stimulates recruitment of Pol I, but does not remain as part of stable preinitiation complex.</text>
</comment>
<comment type="subunit">
    <text evidence="3 4">Monomer (Probable). Interacts with NOP53.</text>
</comment>
<comment type="subcellular location">
    <subcellularLocation>
        <location evidence="4">Nucleus</location>
    </subcellularLocation>
</comment>
<comment type="miscellaneous">
    <text evidence="2">Present with 138 molecules/cell in log phase SD medium.</text>
</comment>
<comment type="similarity">
    <text evidence="4">Belongs to the RRN3 family.</text>
</comment>
<gene>
    <name type="primary">RRN3</name>
    <name type="ordered locus">YKL125W</name>
</gene>
<name>RRN3_YEAST</name>
<reference key="1">
    <citation type="journal article" date="1996" name="EMBO J.">
        <title>RRN3 gene of Saccharomyces cerevisiae encodes an essential RNA polymerase I transcription factor which interacts with the polymerase independently of DNA template.</title>
        <authorList>
            <person name="Yamamoto R.T."/>
            <person name="Nogi Y."/>
            <person name="Dodd J.A."/>
            <person name="Nomura M."/>
        </authorList>
    </citation>
    <scope>NUCLEOTIDE SEQUENCE [GENOMIC DNA]</scope>
    <scope>CHARACTERIZATION</scope>
</reference>
<reference key="2">
    <citation type="journal article" date="1994" name="Nature">
        <title>Complete DNA sequence of yeast chromosome XI.</title>
        <authorList>
            <person name="Dujon B."/>
            <person name="Alexandraki D."/>
            <person name="Andre B."/>
            <person name="Ansorge W."/>
            <person name="Baladron V."/>
            <person name="Ballesta J.P.G."/>
            <person name="Banrevi A."/>
            <person name="Bolle P.-A."/>
            <person name="Bolotin-Fukuhara M."/>
            <person name="Bossier P."/>
            <person name="Bou G."/>
            <person name="Boyer J."/>
            <person name="Buitrago M.J."/>
            <person name="Cheret G."/>
            <person name="Colleaux L."/>
            <person name="Daignan-Fornier B."/>
            <person name="del Rey F."/>
            <person name="Dion C."/>
            <person name="Domdey H."/>
            <person name="Duesterhoeft A."/>
            <person name="Duesterhus S."/>
            <person name="Entian K.-D."/>
            <person name="Erfle H."/>
            <person name="Esteban P.F."/>
            <person name="Feldmann H."/>
            <person name="Fernandes L."/>
            <person name="Fobo G.M."/>
            <person name="Fritz C."/>
            <person name="Fukuhara H."/>
            <person name="Gabel C."/>
            <person name="Gaillon L."/>
            <person name="Garcia-Cantalejo J.M."/>
            <person name="Garcia-Ramirez J.J."/>
            <person name="Gent M.E."/>
            <person name="Ghazvini M."/>
            <person name="Goffeau A."/>
            <person name="Gonzalez A."/>
            <person name="Grothues D."/>
            <person name="Guerreiro P."/>
            <person name="Hegemann J.H."/>
            <person name="Hewitt N."/>
            <person name="Hilger F."/>
            <person name="Hollenberg C.P."/>
            <person name="Horaitis O."/>
            <person name="Indge K.J."/>
            <person name="Jacquier A."/>
            <person name="James C.M."/>
            <person name="Jauniaux J.-C."/>
            <person name="Jimenez A."/>
            <person name="Keuchel H."/>
            <person name="Kirchrath L."/>
            <person name="Kleine K."/>
            <person name="Koetter P."/>
            <person name="Legrain P."/>
            <person name="Liebl S."/>
            <person name="Louis E.J."/>
            <person name="Maia e Silva A."/>
            <person name="Marck C."/>
            <person name="Monnier A.-L."/>
            <person name="Moestl D."/>
            <person name="Mueller S."/>
            <person name="Obermaier B."/>
            <person name="Oliver S.G."/>
            <person name="Pallier C."/>
            <person name="Pascolo S."/>
            <person name="Pfeiffer F."/>
            <person name="Philippsen P."/>
            <person name="Planta R.J."/>
            <person name="Pohl F.M."/>
            <person name="Pohl T.M."/>
            <person name="Poehlmann R."/>
            <person name="Portetelle D."/>
            <person name="Purnelle B."/>
            <person name="Puzos V."/>
            <person name="Ramezani Rad M."/>
            <person name="Rasmussen S.W."/>
            <person name="Remacha M.A."/>
            <person name="Revuelta J.L."/>
            <person name="Richard G.-F."/>
            <person name="Rieger M."/>
            <person name="Rodrigues-Pousada C."/>
            <person name="Rose M."/>
            <person name="Rupp T."/>
            <person name="Santos M.A."/>
            <person name="Schwager C."/>
            <person name="Sensen C."/>
            <person name="Skala J."/>
            <person name="Soares H."/>
            <person name="Sor F."/>
            <person name="Stegemann J."/>
            <person name="Tettelin H."/>
            <person name="Thierry A."/>
            <person name="Tzermia M."/>
            <person name="Urrestarazu L.A."/>
            <person name="van Dyck L."/>
            <person name="van Vliet-Reedijk J.C."/>
            <person name="Valens M."/>
            <person name="Vandenbol M."/>
            <person name="Vilela C."/>
            <person name="Vissers S."/>
            <person name="von Wettstein D."/>
            <person name="Voss H."/>
            <person name="Wiemann S."/>
            <person name="Xu G."/>
            <person name="Zimmermann J."/>
            <person name="Haasemann M."/>
            <person name="Becker I."/>
            <person name="Mewes H.-W."/>
        </authorList>
    </citation>
    <scope>NUCLEOTIDE SEQUENCE [LARGE SCALE GENOMIC DNA]</scope>
    <source>
        <strain>ATCC 204508 / S288c</strain>
    </source>
</reference>
<reference key="3">
    <citation type="journal article" date="2014" name="G3 (Bethesda)">
        <title>The reference genome sequence of Saccharomyces cerevisiae: Then and now.</title>
        <authorList>
            <person name="Engel S.R."/>
            <person name="Dietrich F.S."/>
            <person name="Fisk D.G."/>
            <person name="Binkley G."/>
            <person name="Balakrishnan R."/>
            <person name="Costanzo M.C."/>
            <person name="Dwight S.S."/>
            <person name="Hitz B.C."/>
            <person name="Karra K."/>
            <person name="Nash R.S."/>
            <person name="Weng S."/>
            <person name="Wong E.D."/>
            <person name="Lloyd P."/>
            <person name="Skrzypek M.S."/>
            <person name="Miyasato S.R."/>
            <person name="Simison M."/>
            <person name="Cherry J.M."/>
        </authorList>
    </citation>
    <scope>GENOME REANNOTATION</scope>
    <source>
        <strain>ATCC 204508 / S288c</strain>
    </source>
</reference>
<reference key="4">
    <citation type="journal article" date="2003" name="Nature">
        <title>Global analysis of protein expression in yeast.</title>
        <authorList>
            <person name="Ghaemmaghami S."/>
            <person name="Huh W.-K."/>
            <person name="Bower K."/>
            <person name="Howson R.W."/>
            <person name="Belle A."/>
            <person name="Dephoure N."/>
            <person name="O'Shea E.K."/>
            <person name="Weissman J.S."/>
        </authorList>
    </citation>
    <scope>LEVEL OF PROTEIN EXPRESSION [LARGE SCALE ANALYSIS]</scope>
</reference>
<reference key="5">
    <citation type="journal article" date="2008" name="FEBS J.">
        <title>Nop53p interacts with 5.8S rRNA co-transcriptionally, and regulates processing of pre-rRNA by the exosome.</title>
        <authorList>
            <person name="Granato D.C."/>
            <person name="Machado-Santelli G.M."/>
            <person name="Oliveira C.C."/>
        </authorList>
    </citation>
    <scope>INTERACTION WITH NOP53</scope>
</reference>
<accession>P36070</accession>
<accession>D6VX70</accession>
<evidence type="ECO:0000256" key="1">
    <source>
        <dbReference type="SAM" id="MobiDB-lite"/>
    </source>
</evidence>
<evidence type="ECO:0000269" key="2">
    <source>
    </source>
</evidence>
<evidence type="ECO:0000269" key="3">
    <source>
    </source>
</evidence>
<evidence type="ECO:0000305" key="4"/>
<evidence type="ECO:0007829" key="5">
    <source>
        <dbReference type="PDB" id="3TJ1"/>
    </source>
</evidence>
<evidence type="ECO:0007829" key="6">
    <source>
        <dbReference type="PDB" id="5N61"/>
    </source>
</evidence>
<evidence type="ECO:0007829" key="7">
    <source>
        <dbReference type="PDB" id="6RQL"/>
    </source>
</evidence>
<evidence type="ECO:0007829" key="8">
    <source>
        <dbReference type="PDB" id="6RRD"/>
    </source>
</evidence>
<evidence type="ECO:0007829" key="9">
    <source>
        <dbReference type="PDB" id="6RUI"/>
    </source>
</evidence>
<evidence type="ECO:0007829" key="10">
    <source>
        <dbReference type="PDB" id="6RUO"/>
    </source>
</evidence>
<keyword id="KW-0002">3D-structure</keyword>
<keyword id="KW-0539">Nucleus</keyword>
<keyword id="KW-1185">Reference proteome</keyword>
<keyword id="KW-0804">Transcription</keyword>
<keyword id="KW-0805">Transcription regulation</keyword>
<sequence length="627" mass="72388">MMAFENTSKRPPQDFVAPIDQKKRKVQFSDSTGLVTLQPEEIKDEVFSAAMYSRFVKSALDDLDKNDSTQIGIIANQVALPSKNPERINDKNLNILLDILSSNINRIESSRGTFLIQSIINFEKWWELPPHTLSKYIYFIKILCSSIPKWWQDVSMILVSCFILPIKQTVCHHDMLKYFLRMIPSSMGFIDTYLAKFFPNKNDTRRKLVNYTSNLLKLRGYCSELGFQIWSLLIEKIISIDVELQNELDELDDDVDDDDLEEVDLEDDDDLDDDSGDDDDENCGNSNEELRSGAADGSQSDSEDMDIIEGMDGTEEYNVELTQGIKELSTKLDSILTLVSTHVEEQVTPESLESGEGVGVFNTLTTLFKTHVLPTYYTRSIQYIMFHVSQQQLELMDSFLVTLIDISFAVNEAAEKKIKSLQYLGSYIARAKKLSRTQIIFVASYLTSWLNRYVIEREEEVDQRGGMERFKHFYAAFQALCYIFCFRHNIFRDTDGNWECELDKFFQRMVISKFNPLKFCNENVMLMFARIAQQESVAYCFSIIENNNNERLRGIIGKADSDKKENSAQANTTSSSWSLATRQQFIDLQSYFPYDPLFLKNYKILMKEYYIEWSEASGEYESDGSDD</sequence>